<gene>
    <name evidence="1" type="primary">dctA1</name>
    <name type="ordered locus">PSPA7_0194</name>
</gene>
<feature type="chain" id="PRO_0000321990" description="C4-dicarboxylate transport protein 1">
    <location>
        <begin position="1"/>
        <end position="444"/>
    </location>
</feature>
<feature type="transmembrane region" description="Helical" evidence="1">
    <location>
        <begin position="9"/>
        <end position="29"/>
    </location>
</feature>
<feature type="transmembrane region" description="Helical" evidence="1">
    <location>
        <begin position="42"/>
        <end position="62"/>
    </location>
</feature>
<feature type="transmembrane region" description="Helical" evidence="1">
    <location>
        <begin position="78"/>
        <end position="98"/>
    </location>
</feature>
<feature type="transmembrane region" description="Helical" evidence="1">
    <location>
        <begin position="152"/>
        <end position="172"/>
    </location>
</feature>
<feature type="transmembrane region" description="Helical" evidence="1">
    <location>
        <begin position="190"/>
        <end position="210"/>
    </location>
</feature>
<feature type="transmembrane region" description="Helical" evidence="1">
    <location>
        <begin position="221"/>
        <end position="241"/>
    </location>
</feature>
<feature type="transmembrane region" description="Helical" evidence="1">
    <location>
        <begin position="307"/>
        <end position="327"/>
    </location>
</feature>
<feature type="transmembrane region" description="Helical" evidence="1">
    <location>
        <begin position="354"/>
        <end position="374"/>
    </location>
</feature>
<feature type="transmembrane region" description="Helical" evidence="1">
    <location>
        <begin position="380"/>
        <end position="400"/>
    </location>
</feature>
<evidence type="ECO:0000255" key="1">
    <source>
        <dbReference type="HAMAP-Rule" id="MF_01300"/>
    </source>
</evidence>
<sequence>MFIKRCSRSIFLQVVIGLVIGVLCGVGIPDLAVQMKPLGDGFIKLIKMLIALIVFCVVVNGISGAGDLKKVGRIGLKSVIYFEILTTIALVLGLVVAYSLGLGSGANIHLNELPAGDIALYTGRTQEIHGPVAFLMGLIPTSVFSAFAENDILQVLLFSVLFGSALNLVGEQASGVARLINEFSHIVFRIMGMIVRLAPLGVFGAVAFTTARYGVDSLSHLGALVLVFYATCLVFVMAVLGSVLRLSGVRMLPFLRYFREELLIVMGTASSDAVLPQVMRKLEHMGIRSSTVGLVIPTGYSFNLDGFSIYLTLAVVFIAHVTGTPLAMTDLLTILLVSLVTSKGAHGIPGSALVILAATLTAVPAIPVAGLVLVLSVDWFMGIGRALTNLIGNCVATVTIARWENDIDLPRAQAILDGRLEAPTRTGGEPLERGVVAGEGKLQG</sequence>
<reference key="1">
    <citation type="submission" date="2007-06" db="EMBL/GenBank/DDBJ databases">
        <authorList>
            <person name="Dodson R.J."/>
            <person name="Harkins D."/>
            <person name="Paulsen I.T."/>
        </authorList>
    </citation>
    <scope>NUCLEOTIDE SEQUENCE [LARGE SCALE GENOMIC DNA]</scope>
    <source>
        <strain>DSM 24068 / PA7</strain>
    </source>
</reference>
<proteinExistence type="inferred from homology"/>
<protein>
    <recommendedName>
        <fullName evidence="1">C4-dicarboxylate transport protein 1</fullName>
    </recommendedName>
</protein>
<keyword id="KW-0997">Cell inner membrane</keyword>
<keyword id="KW-1003">Cell membrane</keyword>
<keyword id="KW-0472">Membrane</keyword>
<keyword id="KW-0769">Symport</keyword>
<keyword id="KW-0812">Transmembrane</keyword>
<keyword id="KW-1133">Transmembrane helix</keyword>
<keyword id="KW-0813">Transport</keyword>
<organism>
    <name type="scientific">Pseudomonas paraeruginosa (strain DSM 24068 / PA7)</name>
    <name type="common">Pseudomonas aeruginosa (strain PA7)</name>
    <dbReference type="NCBI Taxonomy" id="381754"/>
    <lineage>
        <taxon>Bacteria</taxon>
        <taxon>Pseudomonadati</taxon>
        <taxon>Pseudomonadota</taxon>
        <taxon>Gammaproteobacteria</taxon>
        <taxon>Pseudomonadales</taxon>
        <taxon>Pseudomonadaceae</taxon>
        <taxon>Pseudomonas</taxon>
        <taxon>Pseudomonas paraeruginosa</taxon>
    </lineage>
</organism>
<dbReference type="EMBL" id="CP000744">
    <property type="protein sequence ID" value="ABR81852.1"/>
    <property type="molecule type" value="Genomic_DNA"/>
</dbReference>
<dbReference type="SMR" id="A6UXQ5"/>
<dbReference type="KEGG" id="pap:PSPA7_0194"/>
<dbReference type="HOGENOM" id="CLU_019375_7_0_6"/>
<dbReference type="Proteomes" id="UP000001582">
    <property type="component" value="Chromosome"/>
</dbReference>
<dbReference type="GO" id="GO:0005886">
    <property type="term" value="C:plasma membrane"/>
    <property type="evidence" value="ECO:0007669"/>
    <property type="project" value="UniProtKB-SubCell"/>
</dbReference>
<dbReference type="GO" id="GO:0015138">
    <property type="term" value="F:fumarate transmembrane transporter activity"/>
    <property type="evidence" value="ECO:0007669"/>
    <property type="project" value="TreeGrafter"/>
</dbReference>
<dbReference type="GO" id="GO:0015366">
    <property type="term" value="F:malate:proton symporter activity"/>
    <property type="evidence" value="ECO:0007669"/>
    <property type="project" value="TreeGrafter"/>
</dbReference>
<dbReference type="GO" id="GO:0015141">
    <property type="term" value="F:succinate transmembrane transporter activity"/>
    <property type="evidence" value="ECO:0007669"/>
    <property type="project" value="TreeGrafter"/>
</dbReference>
<dbReference type="GO" id="GO:0070778">
    <property type="term" value="P:L-aspartate transmembrane transport"/>
    <property type="evidence" value="ECO:0007669"/>
    <property type="project" value="TreeGrafter"/>
</dbReference>
<dbReference type="FunFam" id="1.10.3860.10:FF:000001">
    <property type="entry name" value="C4-dicarboxylate transport protein"/>
    <property type="match status" value="1"/>
</dbReference>
<dbReference type="Gene3D" id="1.10.3860.10">
    <property type="entry name" value="Sodium:dicarboxylate symporter"/>
    <property type="match status" value="1"/>
</dbReference>
<dbReference type="HAMAP" id="MF_01300">
    <property type="entry name" value="C4_dicarb_transport"/>
    <property type="match status" value="1"/>
</dbReference>
<dbReference type="InterPro" id="IPR023954">
    <property type="entry name" value="C4_dicarb_transport"/>
</dbReference>
<dbReference type="InterPro" id="IPR001991">
    <property type="entry name" value="Na-dicarboxylate_symporter"/>
</dbReference>
<dbReference type="InterPro" id="IPR018107">
    <property type="entry name" value="Na-dicarboxylate_symporter_CS"/>
</dbReference>
<dbReference type="InterPro" id="IPR036458">
    <property type="entry name" value="Na:dicarbo_symporter_sf"/>
</dbReference>
<dbReference type="NCBIfam" id="NF002461">
    <property type="entry name" value="PRK01663.1"/>
    <property type="match status" value="1"/>
</dbReference>
<dbReference type="NCBIfam" id="NF009587">
    <property type="entry name" value="PRK13027.1"/>
    <property type="match status" value="1"/>
</dbReference>
<dbReference type="PANTHER" id="PTHR42865:SF1">
    <property type="entry name" value="AEROBIC C4-DICARBOXYLATE TRANSPORT PROTEIN"/>
    <property type="match status" value="1"/>
</dbReference>
<dbReference type="PANTHER" id="PTHR42865">
    <property type="entry name" value="PROTON/GLUTAMATE-ASPARTATE SYMPORTER"/>
    <property type="match status" value="1"/>
</dbReference>
<dbReference type="Pfam" id="PF00375">
    <property type="entry name" value="SDF"/>
    <property type="match status" value="1"/>
</dbReference>
<dbReference type="PRINTS" id="PR00173">
    <property type="entry name" value="EDTRNSPORT"/>
</dbReference>
<dbReference type="SUPFAM" id="SSF118215">
    <property type="entry name" value="Proton glutamate symport protein"/>
    <property type="match status" value="1"/>
</dbReference>
<dbReference type="PROSITE" id="PS00714">
    <property type="entry name" value="NA_DICARBOXYL_SYMP_2"/>
    <property type="match status" value="1"/>
</dbReference>
<name>DCTA1_PSEP7</name>
<accession>A6UXQ5</accession>
<comment type="function">
    <text evidence="1">Responsible for the transport of dicarboxylates such as succinate, fumarate, and malate from the periplasm across the membrane.</text>
</comment>
<comment type="subcellular location">
    <subcellularLocation>
        <location evidence="1">Cell inner membrane</location>
        <topology evidence="1">Multi-pass membrane protein</topology>
    </subcellularLocation>
</comment>
<comment type="similarity">
    <text evidence="1">Belongs to the dicarboxylate/amino acid:cation symporter (DAACS) (TC 2.A.23) family.</text>
</comment>